<reference key="1">
    <citation type="journal article" date="2003" name="Lancet">
        <title>Sequencing and analysis of the genome of the Whipple's disease bacterium Tropheryma whipplei.</title>
        <authorList>
            <person name="Bentley S.D."/>
            <person name="Maiwald M."/>
            <person name="Murphy L.D."/>
            <person name="Pallen M.J."/>
            <person name="Yeats C.A."/>
            <person name="Dover L.G."/>
            <person name="Norbertczak H.T."/>
            <person name="Besra G.S."/>
            <person name="Quail M.A."/>
            <person name="Harris D.E."/>
            <person name="von Herbay A."/>
            <person name="Goble A."/>
            <person name="Rutter S."/>
            <person name="Squares R."/>
            <person name="Squares S."/>
            <person name="Barrell B.G."/>
            <person name="Parkhill J."/>
            <person name="Relman D.A."/>
        </authorList>
    </citation>
    <scope>NUCLEOTIDE SEQUENCE [LARGE SCALE GENOMIC DNA]</scope>
    <source>
        <strain>TW08/27</strain>
    </source>
</reference>
<dbReference type="EMBL" id="BX251410">
    <property type="protein sequence ID" value="CAD66884.1"/>
    <property type="molecule type" value="Genomic_DNA"/>
</dbReference>
<dbReference type="RefSeq" id="WP_011096165.1">
    <property type="nucleotide sequence ID" value="NC_004551.1"/>
</dbReference>
<dbReference type="SMR" id="Q83I78"/>
<dbReference type="GeneID" id="67387983"/>
<dbReference type="KEGG" id="tws:TW207"/>
<dbReference type="HOGENOM" id="CLU_044142_4_1_11"/>
<dbReference type="GO" id="GO:0022625">
    <property type="term" value="C:cytosolic large ribosomal subunit"/>
    <property type="evidence" value="ECO:0007669"/>
    <property type="project" value="TreeGrafter"/>
</dbReference>
<dbReference type="GO" id="GO:0019843">
    <property type="term" value="F:rRNA binding"/>
    <property type="evidence" value="ECO:0007669"/>
    <property type="project" value="UniProtKB-UniRule"/>
</dbReference>
<dbReference type="GO" id="GO:0003735">
    <property type="term" value="F:structural constituent of ribosome"/>
    <property type="evidence" value="ECO:0007669"/>
    <property type="project" value="InterPro"/>
</dbReference>
<dbReference type="GO" id="GO:0006412">
    <property type="term" value="P:translation"/>
    <property type="evidence" value="ECO:0007669"/>
    <property type="project" value="UniProtKB-UniRule"/>
</dbReference>
<dbReference type="FunFam" id="2.40.30.10:FF:000004">
    <property type="entry name" value="50S ribosomal protein L3"/>
    <property type="match status" value="1"/>
</dbReference>
<dbReference type="Gene3D" id="3.30.160.810">
    <property type="match status" value="1"/>
</dbReference>
<dbReference type="Gene3D" id="2.40.30.10">
    <property type="entry name" value="Translation factors"/>
    <property type="match status" value="1"/>
</dbReference>
<dbReference type="HAMAP" id="MF_01325_B">
    <property type="entry name" value="Ribosomal_uL3_B"/>
    <property type="match status" value="1"/>
</dbReference>
<dbReference type="InterPro" id="IPR000597">
    <property type="entry name" value="Ribosomal_uL3"/>
</dbReference>
<dbReference type="InterPro" id="IPR019927">
    <property type="entry name" value="Ribosomal_uL3_bac/org-type"/>
</dbReference>
<dbReference type="InterPro" id="IPR019926">
    <property type="entry name" value="Ribosomal_uL3_CS"/>
</dbReference>
<dbReference type="InterPro" id="IPR009000">
    <property type="entry name" value="Transl_B-barrel_sf"/>
</dbReference>
<dbReference type="NCBIfam" id="TIGR03625">
    <property type="entry name" value="L3_bact"/>
    <property type="match status" value="1"/>
</dbReference>
<dbReference type="PANTHER" id="PTHR11229">
    <property type="entry name" value="50S RIBOSOMAL PROTEIN L3"/>
    <property type="match status" value="1"/>
</dbReference>
<dbReference type="PANTHER" id="PTHR11229:SF16">
    <property type="entry name" value="LARGE RIBOSOMAL SUBUNIT PROTEIN UL3C"/>
    <property type="match status" value="1"/>
</dbReference>
<dbReference type="Pfam" id="PF00297">
    <property type="entry name" value="Ribosomal_L3"/>
    <property type="match status" value="1"/>
</dbReference>
<dbReference type="SUPFAM" id="SSF50447">
    <property type="entry name" value="Translation proteins"/>
    <property type="match status" value="1"/>
</dbReference>
<dbReference type="PROSITE" id="PS00474">
    <property type="entry name" value="RIBOSOMAL_L3"/>
    <property type="match status" value="1"/>
</dbReference>
<evidence type="ECO:0000255" key="1">
    <source>
        <dbReference type="HAMAP-Rule" id="MF_01325"/>
    </source>
</evidence>
<evidence type="ECO:0000256" key="2">
    <source>
        <dbReference type="SAM" id="MobiDB-lite"/>
    </source>
</evidence>
<evidence type="ECO:0000305" key="3"/>
<keyword id="KW-0687">Ribonucleoprotein</keyword>
<keyword id="KW-0689">Ribosomal protein</keyword>
<keyword id="KW-0694">RNA-binding</keyword>
<keyword id="KW-0699">rRNA-binding</keyword>
<organism>
    <name type="scientific">Tropheryma whipplei (strain TW08/27)</name>
    <name type="common">Whipple's bacillus</name>
    <dbReference type="NCBI Taxonomy" id="218496"/>
    <lineage>
        <taxon>Bacteria</taxon>
        <taxon>Bacillati</taxon>
        <taxon>Actinomycetota</taxon>
        <taxon>Actinomycetes</taxon>
        <taxon>Micrococcales</taxon>
        <taxon>Tropherymataceae</taxon>
        <taxon>Tropheryma</taxon>
    </lineage>
</organism>
<proteinExistence type="inferred from homology"/>
<gene>
    <name evidence="1" type="primary">rplC</name>
    <name type="ordered locus">TW207</name>
</gene>
<accession>Q83I78</accession>
<feature type="chain" id="PRO_0000077183" description="Large ribosomal subunit protein uL3">
    <location>
        <begin position="1"/>
        <end position="210"/>
    </location>
</feature>
<feature type="region of interest" description="Disordered" evidence="2">
    <location>
        <begin position="126"/>
        <end position="150"/>
    </location>
</feature>
<protein>
    <recommendedName>
        <fullName evidence="1">Large ribosomal subunit protein uL3</fullName>
    </recommendedName>
    <alternativeName>
        <fullName evidence="3">50S ribosomal protein L3</fullName>
    </alternativeName>
</protein>
<name>RL3_TROW8</name>
<comment type="function">
    <text evidence="1">One of the primary rRNA binding proteins, it binds directly near the 3'-end of the 23S rRNA, where it nucleates assembly of the 50S subunit.</text>
</comment>
<comment type="subunit">
    <text evidence="1">Part of the 50S ribosomal subunit. Forms a cluster with proteins L14 and L19.</text>
</comment>
<comment type="similarity">
    <text evidence="1">Belongs to the universal ribosomal protein uL3 family.</text>
</comment>
<sequence>MARALLGTKVGMTQIWSGRRVVPVTAVAVTTNVVSQVKAPEKDGYSRLQIATGAIDPRRVNRPRKGHFAKAGLTPRRFIREVDSEGSLGDEFGPEIFQEGQLVDVVGKSKGKGFSGTMKRHNFQGVSATHGSHRNHRKPGSVGASSTPSRVFKGTRMAGRLGSSRVTVHNLRLVKIDSENGLLLVEGAVPGSSGSPVIIRDAVKGVPIVS</sequence>